<accession>Q3BRF1</accession>
<gene>
    <name evidence="1" type="primary">rlmH</name>
    <name type="ordered locus">XCV2931</name>
</gene>
<feature type="chain" id="PRO_0000260630" description="Ribosomal RNA large subunit methyltransferase H">
    <location>
        <begin position="1"/>
        <end position="156"/>
    </location>
</feature>
<feature type="binding site" evidence="1">
    <location>
        <position position="73"/>
    </location>
    <ligand>
        <name>S-adenosyl-L-methionine</name>
        <dbReference type="ChEBI" id="CHEBI:59789"/>
    </ligand>
</feature>
<feature type="binding site" evidence="1">
    <location>
        <position position="104"/>
    </location>
    <ligand>
        <name>S-adenosyl-L-methionine</name>
        <dbReference type="ChEBI" id="CHEBI:59789"/>
    </ligand>
</feature>
<feature type="binding site" evidence="1">
    <location>
        <begin position="123"/>
        <end position="128"/>
    </location>
    <ligand>
        <name>S-adenosyl-L-methionine</name>
        <dbReference type="ChEBI" id="CHEBI:59789"/>
    </ligand>
</feature>
<evidence type="ECO:0000255" key="1">
    <source>
        <dbReference type="HAMAP-Rule" id="MF_00658"/>
    </source>
</evidence>
<proteinExistence type="inferred from homology"/>
<keyword id="KW-0963">Cytoplasm</keyword>
<keyword id="KW-0489">Methyltransferase</keyword>
<keyword id="KW-0698">rRNA processing</keyword>
<keyword id="KW-0949">S-adenosyl-L-methionine</keyword>
<keyword id="KW-0808">Transferase</keyword>
<comment type="function">
    <text evidence="1">Specifically methylates the pseudouridine at position 1915 (m3Psi1915) in 23S rRNA.</text>
</comment>
<comment type="catalytic activity">
    <reaction evidence="1">
        <text>pseudouridine(1915) in 23S rRNA + S-adenosyl-L-methionine = N(3)-methylpseudouridine(1915) in 23S rRNA + S-adenosyl-L-homocysteine + H(+)</text>
        <dbReference type="Rhea" id="RHEA:42752"/>
        <dbReference type="Rhea" id="RHEA-COMP:10221"/>
        <dbReference type="Rhea" id="RHEA-COMP:10222"/>
        <dbReference type="ChEBI" id="CHEBI:15378"/>
        <dbReference type="ChEBI" id="CHEBI:57856"/>
        <dbReference type="ChEBI" id="CHEBI:59789"/>
        <dbReference type="ChEBI" id="CHEBI:65314"/>
        <dbReference type="ChEBI" id="CHEBI:74486"/>
        <dbReference type="EC" id="2.1.1.177"/>
    </reaction>
</comment>
<comment type="subunit">
    <text evidence="1">Homodimer.</text>
</comment>
<comment type="subcellular location">
    <subcellularLocation>
        <location evidence="1">Cytoplasm</location>
    </subcellularLocation>
</comment>
<comment type="similarity">
    <text evidence="1">Belongs to the RNA methyltransferase RlmH family.</text>
</comment>
<sequence length="156" mass="17286">MKCRLIATGECAPSWVAQGFAEYQKRLSHWMPLELVEIEPGLRGKGRDAQRATDDEGRRVLAALPKNAYVVALDVPGRPLSSEQLAQRMEHWRGQGRDLAFLIGGPEGHAAEVLKSASESWSIGPLTLPHMLVRLIVAEQLYRAAAMLANHPYHRA</sequence>
<organism>
    <name type="scientific">Xanthomonas euvesicatoria pv. vesicatoria (strain 85-10)</name>
    <name type="common">Xanthomonas campestris pv. vesicatoria</name>
    <dbReference type="NCBI Taxonomy" id="316273"/>
    <lineage>
        <taxon>Bacteria</taxon>
        <taxon>Pseudomonadati</taxon>
        <taxon>Pseudomonadota</taxon>
        <taxon>Gammaproteobacteria</taxon>
        <taxon>Lysobacterales</taxon>
        <taxon>Lysobacteraceae</taxon>
        <taxon>Xanthomonas</taxon>
    </lineage>
</organism>
<reference key="1">
    <citation type="journal article" date="2005" name="J. Bacteriol.">
        <title>Insights into genome plasticity and pathogenicity of the plant pathogenic Bacterium Xanthomonas campestris pv. vesicatoria revealed by the complete genome sequence.</title>
        <authorList>
            <person name="Thieme F."/>
            <person name="Koebnik R."/>
            <person name="Bekel T."/>
            <person name="Berger C."/>
            <person name="Boch J."/>
            <person name="Buettner D."/>
            <person name="Caldana C."/>
            <person name="Gaigalat L."/>
            <person name="Goesmann A."/>
            <person name="Kay S."/>
            <person name="Kirchner O."/>
            <person name="Lanz C."/>
            <person name="Linke B."/>
            <person name="McHardy A.C."/>
            <person name="Meyer F."/>
            <person name="Mittenhuber G."/>
            <person name="Nies D.H."/>
            <person name="Niesbach-Kloesgen U."/>
            <person name="Patschkowski T."/>
            <person name="Rueckert C."/>
            <person name="Rupp O."/>
            <person name="Schneiker S."/>
            <person name="Schuster S.C."/>
            <person name="Vorhoelter F.J."/>
            <person name="Weber E."/>
            <person name="Puehler A."/>
            <person name="Bonas U."/>
            <person name="Bartels D."/>
            <person name="Kaiser O."/>
        </authorList>
    </citation>
    <scope>NUCLEOTIDE SEQUENCE [LARGE SCALE GENOMIC DNA]</scope>
    <source>
        <strain>85-10</strain>
    </source>
</reference>
<name>RLMH_XANE5</name>
<dbReference type="EC" id="2.1.1.177" evidence="1"/>
<dbReference type="EMBL" id="AM039952">
    <property type="protein sequence ID" value="CAJ24610.1"/>
    <property type="molecule type" value="Genomic_DNA"/>
</dbReference>
<dbReference type="RefSeq" id="WP_011348000.1">
    <property type="nucleotide sequence ID" value="NZ_CP017190.1"/>
</dbReference>
<dbReference type="SMR" id="Q3BRF1"/>
<dbReference type="STRING" id="456327.BJD11_08205"/>
<dbReference type="KEGG" id="xcv:XCV2931"/>
<dbReference type="eggNOG" id="COG1576">
    <property type="taxonomic scope" value="Bacteria"/>
</dbReference>
<dbReference type="HOGENOM" id="CLU_100552_1_0_6"/>
<dbReference type="Proteomes" id="UP000007069">
    <property type="component" value="Chromosome"/>
</dbReference>
<dbReference type="GO" id="GO:0005737">
    <property type="term" value="C:cytoplasm"/>
    <property type="evidence" value="ECO:0007669"/>
    <property type="project" value="UniProtKB-SubCell"/>
</dbReference>
<dbReference type="GO" id="GO:0070038">
    <property type="term" value="F:rRNA (pseudouridine-N3-)-methyltransferase activity"/>
    <property type="evidence" value="ECO:0007669"/>
    <property type="project" value="UniProtKB-UniRule"/>
</dbReference>
<dbReference type="CDD" id="cd18081">
    <property type="entry name" value="RlmH-like"/>
    <property type="match status" value="1"/>
</dbReference>
<dbReference type="Gene3D" id="3.40.1280.10">
    <property type="match status" value="1"/>
</dbReference>
<dbReference type="HAMAP" id="MF_00658">
    <property type="entry name" value="23SrRNA_methyltr_H"/>
    <property type="match status" value="1"/>
</dbReference>
<dbReference type="InterPro" id="IPR029028">
    <property type="entry name" value="Alpha/beta_knot_MTases"/>
</dbReference>
<dbReference type="InterPro" id="IPR003742">
    <property type="entry name" value="RlmH-like"/>
</dbReference>
<dbReference type="InterPro" id="IPR029026">
    <property type="entry name" value="tRNA_m1G_MTases_N"/>
</dbReference>
<dbReference type="NCBIfam" id="NF000986">
    <property type="entry name" value="PRK00103.1-4"/>
    <property type="match status" value="1"/>
</dbReference>
<dbReference type="NCBIfam" id="TIGR00246">
    <property type="entry name" value="tRNA_RlmH_YbeA"/>
    <property type="match status" value="1"/>
</dbReference>
<dbReference type="PANTHER" id="PTHR33603">
    <property type="entry name" value="METHYLTRANSFERASE"/>
    <property type="match status" value="1"/>
</dbReference>
<dbReference type="PANTHER" id="PTHR33603:SF1">
    <property type="entry name" value="RIBOSOMAL RNA LARGE SUBUNIT METHYLTRANSFERASE H"/>
    <property type="match status" value="1"/>
</dbReference>
<dbReference type="Pfam" id="PF02590">
    <property type="entry name" value="SPOUT_MTase"/>
    <property type="match status" value="1"/>
</dbReference>
<dbReference type="PIRSF" id="PIRSF004505">
    <property type="entry name" value="MT_bac"/>
    <property type="match status" value="1"/>
</dbReference>
<dbReference type="SUPFAM" id="SSF75217">
    <property type="entry name" value="alpha/beta knot"/>
    <property type="match status" value="1"/>
</dbReference>
<protein>
    <recommendedName>
        <fullName evidence="1">Ribosomal RNA large subunit methyltransferase H</fullName>
        <ecNumber evidence="1">2.1.1.177</ecNumber>
    </recommendedName>
    <alternativeName>
        <fullName evidence="1">23S rRNA (pseudouridine1915-N3)-methyltransferase</fullName>
    </alternativeName>
    <alternativeName>
        <fullName evidence="1">23S rRNA m3Psi1915 methyltransferase</fullName>
    </alternativeName>
    <alternativeName>
        <fullName evidence="1">rRNA (pseudouridine-N3-)-methyltransferase RlmH</fullName>
    </alternativeName>
</protein>